<gene>
    <name evidence="1" type="primary">cobD</name>
    <name type="ordered locus">TK0863</name>
</gene>
<keyword id="KW-1003">Cell membrane</keyword>
<keyword id="KW-0169">Cobalamin biosynthesis</keyword>
<keyword id="KW-0472">Membrane</keyword>
<keyword id="KW-1185">Reference proteome</keyword>
<keyword id="KW-0812">Transmembrane</keyword>
<keyword id="KW-1133">Transmembrane helix</keyword>
<evidence type="ECO:0000255" key="1">
    <source>
        <dbReference type="HAMAP-Rule" id="MF_00024"/>
    </source>
</evidence>
<feature type="chain" id="PRO_0000150946" description="Probable cobalamin biosynthesis protein CobD">
    <location>
        <begin position="1"/>
        <end position="294"/>
    </location>
</feature>
<feature type="transmembrane region" description="Helical" evidence="1">
    <location>
        <begin position="52"/>
        <end position="72"/>
    </location>
</feature>
<feature type="transmembrane region" description="Helical" evidence="1">
    <location>
        <begin position="73"/>
        <end position="93"/>
    </location>
</feature>
<feature type="transmembrane region" description="Helical" evidence="1">
    <location>
        <begin position="145"/>
        <end position="165"/>
    </location>
</feature>
<feature type="transmembrane region" description="Helical" evidence="1">
    <location>
        <begin position="268"/>
        <end position="288"/>
    </location>
</feature>
<protein>
    <recommendedName>
        <fullName evidence="1">Probable cobalamin biosynthesis protein CobD</fullName>
    </recommendedName>
</protein>
<name>COBD_THEKO</name>
<dbReference type="EMBL" id="AP006878">
    <property type="protein sequence ID" value="BAD85052.1"/>
    <property type="molecule type" value="Genomic_DNA"/>
</dbReference>
<dbReference type="RefSeq" id="WP_011249814.1">
    <property type="nucleotide sequence ID" value="NC_006624.1"/>
</dbReference>
<dbReference type="FunCoup" id="Q5JI24">
    <property type="interactions" value="53"/>
</dbReference>
<dbReference type="STRING" id="69014.TK0863"/>
<dbReference type="EnsemblBacteria" id="BAD85052">
    <property type="protein sequence ID" value="BAD85052"/>
    <property type="gene ID" value="TK0863"/>
</dbReference>
<dbReference type="GeneID" id="78447378"/>
<dbReference type="KEGG" id="tko:TK0863"/>
<dbReference type="PATRIC" id="fig|69014.16.peg.842"/>
<dbReference type="eggNOG" id="arCOG04274">
    <property type="taxonomic scope" value="Archaea"/>
</dbReference>
<dbReference type="HOGENOM" id="CLU_054212_0_2_2"/>
<dbReference type="InParanoid" id="Q5JI24"/>
<dbReference type="OrthoDB" id="46105at2157"/>
<dbReference type="PhylomeDB" id="Q5JI24"/>
<dbReference type="UniPathway" id="UPA00148"/>
<dbReference type="Proteomes" id="UP000000536">
    <property type="component" value="Chromosome"/>
</dbReference>
<dbReference type="GO" id="GO:0005886">
    <property type="term" value="C:plasma membrane"/>
    <property type="evidence" value="ECO:0007669"/>
    <property type="project" value="UniProtKB-SubCell"/>
</dbReference>
<dbReference type="GO" id="GO:0015420">
    <property type="term" value="F:ABC-type vitamin B12 transporter activity"/>
    <property type="evidence" value="ECO:0007669"/>
    <property type="project" value="UniProtKB-UniRule"/>
</dbReference>
<dbReference type="GO" id="GO:0048472">
    <property type="term" value="F:threonine-phosphate decarboxylase activity"/>
    <property type="evidence" value="ECO:0007669"/>
    <property type="project" value="InterPro"/>
</dbReference>
<dbReference type="GO" id="GO:0009236">
    <property type="term" value="P:cobalamin biosynthetic process"/>
    <property type="evidence" value="ECO:0007669"/>
    <property type="project" value="UniProtKB-UniRule"/>
</dbReference>
<dbReference type="HAMAP" id="MF_00024">
    <property type="entry name" value="CobD_CbiB"/>
    <property type="match status" value="1"/>
</dbReference>
<dbReference type="InterPro" id="IPR004485">
    <property type="entry name" value="Cobalamin_biosynth_CobD/CbiB"/>
</dbReference>
<dbReference type="NCBIfam" id="TIGR00380">
    <property type="entry name" value="cobal_cbiB"/>
    <property type="match status" value="1"/>
</dbReference>
<dbReference type="PANTHER" id="PTHR34308">
    <property type="entry name" value="COBALAMIN BIOSYNTHESIS PROTEIN CBIB"/>
    <property type="match status" value="1"/>
</dbReference>
<dbReference type="PANTHER" id="PTHR34308:SF1">
    <property type="entry name" value="COBALAMIN BIOSYNTHESIS PROTEIN CBIB"/>
    <property type="match status" value="1"/>
</dbReference>
<dbReference type="Pfam" id="PF03186">
    <property type="entry name" value="CobD_Cbib"/>
    <property type="match status" value="1"/>
</dbReference>
<sequence>MHALVPFLLALAWDLTLGEPPAKLHPVVWFGRIAGFIDSRYKRRSPVLDFTAGLLTALVVITFAFLLSIVPFYAPFPLNYFLAAYLLKSSFAIKSLHEHVSRTITDDIEEKRRAVSMIVSRNTKVLDEAHLNSAAIESLAENLNDSVVAPLFYFLLFGLQGAVIYRAVNTLDAMLGYRNERYEFFGKFSARLDDALNFIPARLTVLLYLPLGGRKVPEYYRLARFKINSDKPMAAMSAVLGVWLEKPGVYRFPGKEPKNEDIKRALRIYWLVVTGWVIVVVLLLATGVCPCLSL</sequence>
<reference key="1">
    <citation type="journal article" date="2005" name="Genome Res.">
        <title>Complete genome sequence of the hyperthermophilic archaeon Thermococcus kodakaraensis KOD1 and comparison with Pyrococcus genomes.</title>
        <authorList>
            <person name="Fukui T."/>
            <person name="Atomi H."/>
            <person name="Kanai T."/>
            <person name="Matsumi R."/>
            <person name="Fujiwara S."/>
            <person name="Imanaka T."/>
        </authorList>
    </citation>
    <scope>NUCLEOTIDE SEQUENCE [LARGE SCALE GENOMIC DNA]</scope>
    <source>
        <strain>ATCC BAA-918 / JCM 12380 / KOD1</strain>
    </source>
</reference>
<comment type="function">
    <text evidence="1">Converts cobyric acid to cobinamide by the addition of aminopropanol on the F carboxylic group.</text>
</comment>
<comment type="pathway">
    <text evidence="1">Cofactor biosynthesis; adenosylcobalamin biosynthesis.</text>
</comment>
<comment type="subcellular location">
    <subcellularLocation>
        <location evidence="1">Cell membrane</location>
        <topology evidence="1">Multi-pass membrane protein</topology>
    </subcellularLocation>
</comment>
<comment type="similarity">
    <text evidence="1">Belongs to the CobD/CbiB family.</text>
</comment>
<proteinExistence type="inferred from homology"/>
<accession>Q5JI24</accession>
<organism>
    <name type="scientific">Thermococcus kodakarensis (strain ATCC BAA-918 / JCM 12380 / KOD1)</name>
    <name type="common">Pyrococcus kodakaraensis (strain KOD1)</name>
    <dbReference type="NCBI Taxonomy" id="69014"/>
    <lineage>
        <taxon>Archaea</taxon>
        <taxon>Methanobacteriati</taxon>
        <taxon>Methanobacteriota</taxon>
        <taxon>Thermococci</taxon>
        <taxon>Thermococcales</taxon>
        <taxon>Thermococcaceae</taxon>
        <taxon>Thermococcus</taxon>
    </lineage>
</organism>